<keyword id="KW-0413">Isomerase</keyword>
<keyword id="KW-0663">Pyridoxal phosphate</keyword>
<keyword id="KW-1185">Reference proteome</keyword>
<accession>Q8YU96</accession>
<gene>
    <name type="primary">alr</name>
    <name type="ordered locus">alr2458</name>
</gene>
<evidence type="ECO:0000255" key="1">
    <source>
        <dbReference type="HAMAP-Rule" id="MF_01201"/>
    </source>
</evidence>
<evidence type="ECO:0000305" key="2"/>
<feature type="chain" id="PRO_0000114494" description="Alanine racemase">
    <location>
        <begin position="1"/>
        <end position="386"/>
    </location>
</feature>
<feature type="active site" description="Proton acceptor; specific for D-alanine" evidence="1">
    <location>
        <position position="48"/>
    </location>
</feature>
<feature type="active site" description="Proton acceptor; specific for L-alanine" evidence="1">
    <location>
        <position position="278"/>
    </location>
</feature>
<feature type="binding site" evidence="1">
    <location>
        <position position="149"/>
    </location>
    <ligand>
        <name>substrate</name>
    </ligand>
</feature>
<feature type="binding site" evidence="1">
    <location>
        <position position="326"/>
    </location>
    <ligand>
        <name>substrate</name>
    </ligand>
</feature>
<feature type="modified residue" description="N6-(pyridoxal phosphate)lysine" evidence="1">
    <location>
        <position position="48"/>
    </location>
</feature>
<proteinExistence type="inferred from homology"/>
<comment type="function">
    <text evidence="1">Catalyzes the interconversion of L-alanine and D-alanine. May also act on other amino acids.</text>
</comment>
<comment type="catalytic activity">
    <reaction evidence="1">
        <text>L-alanine = D-alanine</text>
        <dbReference type="Rhea" id="RHEA:20249"/>
        <dbReference type="ChEBI" id="CHEBI:57416"/>
        <dbReference type="ChEBI" id="CHEBI:57972"/>
        <dbReference type="EC" id="5.1.1.1"/>
    </reaction>
</comment>
<comment type="cofactor">
    <cofactor evidence="1">
        <name>pyridoxal 5'-phosphate</name>
        <dbReference type="ChEBI" id="CHEBI:597326"/>
    </cofactor>
</comment>
<comment type="pathway">
    <text evidence="1">Amino-acid biosynthesis; D-alanine biosynthesis; D-alanine from L-alanine: step 1/1.</text>
</comment>
<comment type="similarity">
    <text evidence="1">Belongs to the alanine racemase family.</text>
</comment>
<comment type="sequence caution" evidence="2">
    <conflict type="erroneous initiation">
        <sequence resource="EMBL-CDS" id="BAB74157"/>
    </conflict>
</comment>
<organism>
    <name type="scientific">Nostoc sp. (strain PCC 7120 / SAG 25.82 / UTEX 2576)</name>
    <dbReference type="NCBI Taxonomy" id="103690"/>
    <lineage>
        <taxon>Bacteria</taxon>
        <taxon>Bacillati</taxon>
        <taxon>Cyanobacteriota</taxon>
        <taxon>Cyanophyceae</taxon>
        <taxon>Nostocales</taxon>
        <taxon>Nostocaceae</taxon>
        <taxon>Nostoc</taxon>
    </lineage>
</organism>
<protein>
    <recommendedName>
        <fullName evidence="1">Alanine racemase</fullName>
        <ecNumber evidence="1">5.1.1.1</ecNumber>
    </recommendedName>
</protein>
<dbReference type="EC" id="5.1.1.1" evidence="1"/>
<dbReference type="EMBL" id="BA000019">
    <property type="protein sequence ID" value="BAB74157.1"/>
    <property type="status" value="ALT_INIT"/>
    <property type="molecule type" value="Genomic_DNA"/>
</dbReference>
<dbReference type="PIR" id="AC2113">
    <property type="entry name" value="AC2113"/>
</dbReference>
<dbReference type="SMR" id="Q8YU96"/>
<dbReference type="STRING" id="103690.gene:10494488"/>
<dbReference type="KEGG" id="ana:alr2458"/>
<dbReference type="eggNOG" id="COG0787">
    <property type="taxonomic scope" value="Bacteria"/>
</dbReference>
<dbReference type="UniPathway" id="UPA00042">
    <property type="reaction ID" value="UER00497"/>
</dbReference>
<dbReference type="Proteomes" id="UP000002483">
    <property type="component" value="Chromosome"/>
</dbReference>
<dbReference type="GO" id="GO:0005829">
    <property type="term" value="C:cytosol"/>
    <property type="evidence" value="ECO:0007669"/>
    <property type="project" value="TreeGrafter"/>
</dbReference>
<dbReference type="GO" id="GO:0008784">
    <property type="term" value="F:alanine racemase activity"/>
    <property type="evidence" value="ECO:0007669"/>
    <property type="project" value="UniProtKB-UniRule"/>
</dbReference>
<dbReference type="GO" id="GO:0030170">
    <property type="term" value="F:pyridoxal phosphate binding"/>
    <property type="evidence" value="ECO:0007669"/>
    <property type="project" value="UniProtKB-UniRule"/>
</dbReference>
<dbReference type="GO" id="GO:0030632">
    <property type="term" value="P:D-alanine biosynthetic process"/>
    <property type="evidence" value="ECO:0007669"/>
    <property type="project" value="UniProtKB-UniRule"/>
</dbReference>
<dbReference type="CDD" id="cd00430">
    <property type="entry name" value="PLPDE_III_AR"/>
    <property type="match status" value="1"/>
</dbReference>
<dbReference type="FunFam" id="3.20.20.10:FF:000002">
    <property type="entry name" value="Alanine racemase"/>
    <property type="match status" value="1"/>
</dbReference>
<dbReference type="Gene3D" id="3.20.20.10">
    <property type="entry name" value="Alanine racemase"/>
    <property type="match status" value="1"/>
</dbReference>
<dbReference type="Gene3D" id="2.40.37.10">
    <property type="entry name" value="Lyase, Ornithine Decarboxylase, Chain A, domain 1"/>
    <property type="match status" value="1"/>
</dbReference>
<dbReference type="HAMAP" id="MF_01201">
    <property type="entry name" value="Ala_racemase"/>
    <property type="match status" value="1"/>
</dbReference>
<dbReference type="InterPro" id="IPR000821">
    <property type="entry name" value="Ala_racemase"/>
</dbReference>
<dbReference type="InterPro" id="IPR009006">
    <property type="entry name" value="Ala_racemase/Decarboxylase_C"/>
</dbReference>
<dbReference type="InterPro" id="IPR011079">
    <property type="entry name" value="Ala_racemase_C"/>
</dbReference>
<dbReference type="InterPro" id="IPR001608">
    <property type="entry name" value="Ala_racemase_N"/>
</dbReference>
<dbReference type="InterPro" id="IPR020622">
    <property type="entry name" value="Ala_racemase_pyridoxalP-BS"/>
</dbReference>
<dbReference type="InterPro" id="IPR029066">
    <property type="entry name" value="PLP-binding_barrel"/>
</dbReference>
<dbReference type="NCBIfam" id="TIGR00492">
    <property type="entry name" value="alr"/>
    <property type="match status" value="1"/>
</dbReference>
<dbReference type="PANTHER" id="PTHR30511">
    <property type="entry name" value="ALANINE RACEMASE"/>
    <property type="match status" value="1"/>
</dbReference>
<dbReference type="PANTHER" id="PTHR30511:SF0">
    <property type="entry name" value="ALANINE RACEMASE, CATABOLIC-RELATED"/>
    <property type="match status" value="1"/>
</dbReference>
<dbReference type="Pfam" id="PF00842">
    <property type="entry name" value="Ala_racemase_C"/>
    <property type="match status" value="1"/>
</dbReference>
<dbReference type="Pfam" id="PF01168">
    <property type="entry name" value="Ala_racemase_N"/>
    <property type="match status" value="1"/>
</dbReference>
<dbReference type="PRINTS" id="PR00992">
    <property type="entry name" value="ALARACEMASE"/>
</dbReference>
<dbReference type="SMART" id="SM01005">
    <property type="entry name" value="Ala_racemase_C"/>
    <property type="match status" value="1"/>
</dbReference>
<dbReference type="SUPFAM" id="SSF50621">
    <property type="entry name" value="Alanine racemase C-terminal domain-like"/>
    <property type="match status" value="1"/>
</dbReference>
<dbReference type="SUPFAM" id="SSF51419">
    <property type="entry name" value="PLP-binding barrel"/>
    <property type="match status" value="1"/>
</dbReference>
<dbReference type="PROSITE" id="PS00395">
    <property type="entry name" value="ALANINE_RACEMASE"/>
    <property type="match status" value="1"/>
</dbReference>
<sequence>MASHQQCDTYAWFSQRAWVEIDLEALSHNVQQLKQFLSPRTQLMAVVKADAYGHGAVTVAQTALQAGASCLGVATVPEGIQLREAGIQAPILILGATHTPEQIQAIAQWQLQATIGSPKQALIFSNTLETIQHDSPIPVHIKLDTGMSRLGTNWQQAGEFVQLVERLPHLDIASVYSHLATADSPDPGIMEEQHRRFEEAIAQIKTLGIKIPSLHLANSAATLADPRLHYDMVRVGLAVYGLYPAPHLQNKISLKPVIQVQARITHVKTIAAGTGVSYGHQFIAPHEMRLAVVSIGYADGVPRNLSNKMQVLIRGQRVPQIGAITMDQLMIDASALPDLQEGEIVTLLGKQGKEKITADDWAEALNTISWEVLCGFKHRLPRVGVM</sequence>
<reference key="1">
    <citation type="journal article" date="2001" name="DNA Res.">
        <title>Complete genomic sequence of the filamentous nitrogen-fixing cyanobacterium Anabaena sp. strain PCC 7120.</title>
        <authorList>
            <person name="Kaneko T."/>
            <person name="Nakamura Y."/>
            <person name="Wolk C.P."/>
            <person name="Kuritz T."/>
            <person name="Sasamoto S."/>
            <person name="Watanabe A."/>
            <person name="Iriguchi M."/>
            <person name="Ishikawa A."/>
            <person name="Kawashima K."/>
            <person name="Kimura T."/>
            <person name="Kishida Y."/>
            <person name="Kohara M."/>
            <person name="Matsumoto M."/>
            <person name="Matsuno A."/>
            <person name="Muraki A."/>
            <person name="Nakazaki N."/>
            <person name="Shimpo S."/>
            <person name="Sugimoto M."/>
            <person name="Takazawa M."/>
            <person name="Yamada M."/>
            <person name="Yasuda M."/>
            <person name="Tabata S."/>
        </authorList>
    </citation>
    <scope>NUCLEOTIDE SEQUENCE [LARGE SCALE GENOMIC DNA]</scope>
    <source>
        <strain>PCC 7120 / SAG 25.82 / UTEX 2576</strain>
    </source>
</reference>
<name>ALR_NOSS1</name>